<dbReference type="EC" id="2.4.2.17" evidence="1"/>
<dbReference type="EMBL" id="CP000253">
    <property type="protein sequence ID" value="ABD32000.1"/>
    <property type="molecule type" value="Genomic_DNA"/>
</dbReference>
<dbReference type="RefSeq" id="WP_000944149.1">
    <property type="nucleotide sequence ID" value="NZ_LS483365.1"/>
</dbReference>
<dbReference type="RefSeq" id="YP_501463.1">
    <property type="nucleotide sequence ID" value="NC_007795.1"/>
</dbReference>
<dbReference type="SMR" id="Q2FUT7"/>
<dbReference type="STRING" id="93061.SAOUHSC_03014"/>
<dbReference type="PaxDb" id="1280-SAXN108_2953"/>
<dbReference type="GeneID" id="3921495"/>
<dbReference type="KEGG" id="sao:SAOUHSC_03014"/>
<dbReference type="PATRIC" id="fig|93061.5.peg.2722"/>
<dbReference type="eggNOG" id="COG0040">
    <property type="taxonomic scope" value="Bacteria"/>
</dbReference>
<dbReference type="HOGENOM" id="CLU_038115_2_0_9"/>
<dbReference type="OrthoDB" id="9801867at2"/>
<dbReference type="UniPathway" id="UPA00031">
    <property type="reaction ID" value="UER00006"/>
</dbReference>
<dbReference type="PRO" id="PR:Q2FUT7"/>
<dbReference type="Proteomes" id="UP000008816">
    <property type="component" value="Chromosome"/>
</dbReference>
<dbReference type="GO" id="GO:0005737">
    <property type="term" value="C:cytoplasm"/>
    <property type="evidence" value="ECO:0007669"/>
    <property type="project" value="UniProtKB-SubCell"/>
</dbReference>
<dbReference type="GO" id="GO:0005524">
    <property type="term" value="F:ATP binding"/>
    <property type="evidence" value="ECO:0007669"/>
    <property type="project" value="UniProtKB-KW"/>
</dbReference>
<dbReference type="GO" id="GO:0003879">
    <property type="term" value="F:ATP phosphoribosyltransferase activity"/>
    <property type="evidence" value="ECO:0000318"/>
    <property type="project" value="GO_Central"/>
</dbReference>
<dbReference type="GO" id="GO:0000105">
    <property type="term" value="P:L-histidine biosynthetic process"/>
    <property type="evidence" value="ECO:0000318"/>
    <property type="project" value="GO_Central"/>
</dbReference>
<dbReference type="CDD" id="cd13595">
    <property type="entry name" value="PBP2_HisGs"/>
    <property type="match status" value="1"/>
</dbReference>
<dbReference type="FunFam" id="3.40.190.10:FF:000008">
    <property type="entry name" value="ATP phosphoribosyltransferase"/>
    <property type="match status" value="1"/>
</dbReference>
<dbReference type="Gene3D" id="3.40.190.10">
    <property type="entry name" value="Periplasmic binding protein-like II"/>
    <property type="match status" value="2"/>
</dbReference>
<dbReference type="HAMAP" id="MF_01018">
    <property type="entry name" value="HisG_Short"/>
    <property type="match status" value="1"/>
</dbReference>
<dbReference type="InterPro" id="IPR013820">
    <property type="entry name" value="ATP_PRibTrfase_cat"/>
</dbReference>
<dbReference type="InterPro" id="IPR001348">
    <property type="entry name" value="ATP_PRibTrfase_HisG"/>
</dbReference>
<dbReference type="InterPro" id="IPR024893">
    <property type="entry name" value="ATP_PRibTrfase_HisG_short"/>
</dbReference>
<dbReference type="NCBIfam" id="TIGR00070">
    <property type="entry name" value="hisG"/>
    <property type="match status" value="1"/>
</dbReference>
<dbReference type="PANTHER" id="PTHR21403:SF8">
    <property type="entry name" value="ATP PHOSPHORIBOSYLTRANSFERASE"/>
    <property type="match status" value="1"/>
</dbReference>
<dbReference type="PANTHER" id="PTHR21403">
    <property type="entry name" value="ATP PHOSPHORIBOSYLTRANSFERASE ATP-PRTASE"/>
    <property type="match status" value="1"/>
</dbReference>
<dbReference type="Pfam" id="PF01634">
    <property type="entry name" value="HisG"/>
    <property type="match status" value="1"/>
</dbReference>
<dbReference type="SUPFAM" id="SSF53850">
    <property type="entry name" value="Periplasmic binding protein-like II"/>
    <property type="match status" value="1"/>
</dbReference>
<proteinExistence type="inferred from homology"/>
<evidence type="ECO:0000255" key="1">
    <source>
        <dbReference type="HAMAP-Rule" id="MF_01018"/>
    </source>
</evidence>
<name>HIS1_STAA8</name>
<sequence>MLRIAIAKGRLMDSLINYLDVIEYTTLSETLKNRERQLLLSVDNIECILVKGSDVPIYVEQGMADIGIVGSDILDERQYNVNNLLNMPFGACHFAVAAKPETTNYRKIATSYVHTAETYFKSKGIDVELIKLNGSVELACVVDMVDGIVDIVQTGTTLKANGLVEKQHISDINARLITNKAAYFKKSQLIEQFIRSLEVSIANA</sequence>
<gene>
    <name evidence="1" type="primary">hisG</name>
    <name type="ordered locus">SAOUHSC_03014</name>
</gene>
<accession>Q2FUT7</accession>
<keyword id="KW-0028">Amino-acid biosynthesis</keyword>
<keyword id="KW-0067">ATP-binding</keyword>
<keyword id="KW-0963">Cytoplasm</keyword>
<keyword id="KW-0328">Glycosyltransferase</keyword>
<keyword id="KW-0368">Histidine biosynthesis</keyword>
<keyword id="KW-0547">Nucleotide-binding</keyword>
<keyword id="KW-1185">Reference proteome</keyword>
<keyword id="KW-0808">Transferase</keyword>
<protein>
    <recommendedName>
        <fullName evidence="1">ATP phosphoribosyltransferase</fullName>
        <shortName evidence="1">ATP-PRT</shortName>
        <shortName evidence="1">ATP-PRTase</shortName>
        <ecNumber evidence="1">2.4.2.17</ecNumber>
    </recommendedName>
</protein>
<reference key="1">
    <citation type="book" date="2006" name="Gram positive pathogens, 2nd edition">
        <title>The Staphylococcus aureus NCTC 8325 genome.</title>
        <editorList>
            <person name="Fischetti V."/>
            <person name="Novick R."/>
            <person name="Ferretti J."/>
            <person name="Portnoy D."/>
            <person name="Rood J."/>
        </editorList>
        <authorList>
            <person name="Gillaspy A.F."/>
            <person name="Worrell V."/>
            <person name="Orvis J."/>
            <person name="Roe B.A."/>
            <person name="Dyer D.W."/>
            <person name="Iandolo J.J."/>
        </authorList>
    </citation>
    <scope>NUCLEOTIDE SEQUENCE [LARGE SCALE GENOMIC DNA]</scope>
    <source>
        <strain>NCTC 8325 / PS 47</strain>
    </source>
</reference>
<feature type="chain" id="PRO_1000063311" description="ATP phosphoribosyltransferase">
    <location>
        <begin position="1"/>
        <end position="204"/>
    </location>
</feature>
<organism>
    <name type="scientific">Staphylococcus aureus (strain NCTC 8325 / PS 47)</name>
    <dbReference type="NCBI Taxonomy" id="93061"/>
    <lineage>
        <taxon>Bacteria</taxon>
        <taxon>Bacillati</taxon>
        <taxon>Bacillota</taxon>
        <taxon>Bacilli</taxon>
        <taxon>Bacillales</taxon>
        <taxon>Staphylococcaceae</taxon>
        <taxon>Staphylococcus</taxon>
    </lineage>
</organism>
<comment type="function">
    <text evidence="1">Catalyzes the condensation of ATP and 5-phosphoribose 1-diphosphate to form N'-(5'-phosphoribosyl)-ATP (PR-ATP). Has a crucial role in the pathway because the rate of histidine biosynthesis seems to be controlled primarily by regulation of HisG enzymatic activity.</text>
</comment>
<comment type="catalytic activity">
    <reaction evidence="1">
        <text>1-(5-phospho-beta-D-ribosyl)-ATP + diphosphate = 5-phospho-alpha-D-ribose 1-diphosphate + ATP</text>
        <dbReference type="Rhea" id="RHEA:18473"/>
        <dbReference type="ChEBI" id="CHEBI:30616"/>
        <dbReference type="ChEBI" id="CHEBI:33019"/>
        <dbReference type="ChEBI" id="CHEBI:58017"/>
        <dbReference type="ChEBI" id="CHEBI:73183"/>
        <dbReference type="EC" id="2.4.2.17"/>
    </reaction>
</comment>
<comment type="pathway">
    <text evidence="1">Amino-acid biosynthesis; L-histidine biosynthesis; L-histidine from 5-phospho-alpha-D-ribose 1-diphosphate: step 1/9.</text>
</comment>
<comment type="subunit">
    <text evidence="1">Heteromultimer composed of HisG and HisZ subunits.</text>
</comment>
<comment type="subcellular location">
    <subcellularLocation>
        <location evidence="1">Cytoplasm</location>
    </subcellularLocation>
</comment>
<comment type="domain">
    <text>Lacks the C-terminal regulatory region which is replaced by HisZ.</text>
</comment>
<comment type="similarity">
    <text evidence="1">Belongs to the ATP phosphoribosyltransferase family. Short subfamily.</text>
</comment>